<dbReference type="EMBL" id="AK016937">
    <property type="protein sequence ID" value="BAB30507.2"/>
    <property type="molecule type" value="mRNA"/>
</dbReference>
<dbReference type="EMBL" id="AK078541">
    <property type="protein sequence ID" value="BAC37328.1"/>
    <property type="molecule type" value="mRNA"/>
</dbReference>
<dbReference type="EMBL" id="AC113311">
    <property type="status" value="NOT_ANNOTATED_CDS"/>
    <property type="molecule type" value="Genomic_DNA"/>
</dbReference>
<dbReference type="EMBL" id="BC054781">
    <property type="protein sequence ID" value="AAH54781.1"/>
    <property type="molecule type" value="mRNA"/>
</dbReference>
<dbReference type="EMBL" id="BC057019">
    <property type="protein sequence ID" value="AAH57019.1"/>
    <property type="molecule type" value="mRNA"/>
</dbReference>
<dbReference type="EMBL" id="AK172953">
    <property type="protein sequence ID" value="BAD32231.1"/>
    <property type="molecule type" value="mRNA"/>
</dbReference>
<dbReference type="RefSeq" id="XP_006497000.1">
    <molecule id="Q6A065-1"/>
    <property type="nucleotide sequence ID" value="XM_006496937.4"/>
</dbReference>
<dbReference type="RefSeq" id="XP_030111426.1">
    <molecule id="Q6A065-1"/>
    <property type="nucleotide sequence ID" value="XM_030255566.2"/>
</dbReference>
<dbReference type="SMR" id="Q6A065"/>
<dbReference type="BioGRID" id="244244">
    <property type="interactions" value="49"/>
</dbReference>
<dbReference type="FunCoup" id="Q6A065">
    <property type="interactions" value="2049"/>
</dbReference>
<dbReference type="IntAct" id="Q6A065">
    <property type="interactions" value="22"/>
</dbReference>
<dbReference type="MINT" id="Q6A065"/>
<dbReference type="STRING" id="10090.ENSMUSP00000141769"/>
<dbReference type="ChEMBL" id="CHEMBL4879479"/>
<dbReference type="GlyGen" id="Q6A065">
    <property type="glycosylation" value="7 sites, 1 N-linked glycan (1 site), 1 O-linked glycan (5 sites)"/>
</dbReference>
<dbReference type="iPTMnet" id="Q6A065"/>
<dbReference type="PhosphoSitePlus" id="Q6A065"/>
<dbReference type="SwissPalm" id="Q6A065"/>
<dbReference type="jPOST" id="Q6A065"/>
<dbReference type="PaxDb" id="10090-ENSMUSP00000059562"/>
<dbReference type="PeptideAtlas" id="Q6A065"/>
<dbReference type="ProteomicsDB" id="281365">
    <molecule id="Q6A065-1"/>
</dbReference>
<dbReference type="ProteomicsDB" id="281366">
    <molecule id="Q6A065-2"/>
</dbReference>
<dbReference type="ProteomicsDB" id="281367">
    <molecule id="Q6A065-3"/>
</dbReference>
<dbReference type="Pumba" id="Q6A065"/>
<dbReference type="Antibodypedia" id="34708">
    <property type="antibodies" value="110 antibodies from 21 providers"/>
</dbReference>
<dbReference type="Ensembl" id="ENSMUST00000192961.6">
    <molecule id="Q6A065-2"/>
    <property type="protein sequence ID" value="ENSMUSP00000142271.2"/>
    <property type="gene ID" value="ENSMUSG00000057335.12"/>
</dbReference>
<dbReference type="Ensembl" id="ENSMUST00000194727.6">
    <molecule id="Q6A065-1"/>
    <property type="protein sequence ID" value="ENSMUSP00000141793.2"/>
    <property type="gene ID" value="ENSMUSG00000057335.12"/>
</dbReference>
<dbReference type="GeneID" id="545389"/>
<dbReference type="UCSC" id="uc007dub.1">
    <molecule id="Q6A065-3"/>
    <property type="organism name" value="mouse"/>
</dbReference>
<dbReference type="UCSC" id="uc007duc.1">
    <molecule id="Q6A065-1"/>
    <property type="organism name" value="mouse"/>
</dbReference>
<dbReference type="UCSC" id="uc007dug.2">
    <molecule id="Q6A065-2"/>
    <property type="organism name" value="mouse"/>
</dbReference>
<dbReference type="AGR" id="MGI:1918348"/>
<dbReference type="CTD" id="9859"/>
<dbReference type="MGI" id="MGI:1918348">
    <property type="gene designation" value="Cep170"/>
</dbReference>
<dbReference type="VEuPathDB" id="HostDB:ENSMUSG00000057335"/>
<dbReference type="eggNOG" id="ENOG502QSH8">
    <property type="taxonomic scope" value="Eukaryota"/>
</dbReference>
<dbReference type="GeneTree" id="ENSGT00940000155103"/>
<dbReference type="HOGENOM" id="CLU_1175117_0_0_1"/>
<dbReference type="InParanoid" id="Q6A065"/>
<dbReference type="OMA" id="XINAMID"/>
<dbReference type="OrthoDB" id="444265at2759"/>
<dbReference type="PhylomeDB" id="Q6A065"/>
<dbReference type="BioGRID-ORCS" id="545389">
    <property type="hits" value="2 hits in 77 CRISPR screens"/>
</dbReference>
<dbReference type="CD-CODE" id="01CA17F3">
    <property type="entry name" value="Centrosome"/>
</dbReference>
<dbReference type="CD-CODE" id="CE726F99">
    <property type="entry name" value="Postsynaptic density"/>
</dbReference>
<dbReference type="ChiTaRS" id="Cep170">
    <property type="organism name" value="mouse"/>
</dbReference>
<dbReference type="PRO" id="PR:Q6A065"/>
<dbReference type="Proteomes" id="UP000000589">
    <property type="component" value="Chromosome 1"/>
</dbReference>
<dbReference type="RNAct" id="Q6A065">
    <property type="molecule type" value="protein"/>
</dbReference>
<dbReference type="Bgee" id="ENSMUSG00000057335">
    <property type="expression patterns" value="Expressed in cortical plate and 223 other cell types or tissues"/>
</dbReference>
<dbReference type="ExpressionAtlas" id="Q6A065">
    <property type="expression patterns" value="baseline and differential"/>
</dbReference>
<dbReference type="GO" id="GO:0120103">
    <property type="term" value="C:centriolar subdistal appendage"/>
    <property type="evidence" value="ECO:0007669"/>
    <property type="project" value="Ensembl"/>
</dbReference>
<dbReference type="GO" id="GO:0005814">
    <property type="term" value="C:centriole"/>
    <property type="evidence" value="ECO:0000314"/>
    <property type="project" value="UniProtKB"/>
</dbReference>
<dbReference type="GO" id="GO:0005813">
    <property type="term" value="C:centrosome"/>
    <property type="evidence" value="ECO:0007669"/>
    <property type="project" value="UniProtKB-SubCell"/>
</dbReference>
<dbReference type="GO" id="GO:0036064">
    <property type="term" value="C:ciliary basal body"/>
    <property type="evidence" value="ECO:0007669"/>
    <property type="project" value="Ensembl"/>
</dbReference>
<dbReference type="GO" id="GO:0005829">
    <property type="term" value="C:cytosol"/>
    <property type="evidence" value="ECO:0007669"/>
    <property type="project" value="Ensembl"/>
</dbReference>
<dbReference type="GO" id="GO:0005874">
    <property type="term" value="C:microtubule"/>
    <property type="evidence" value="ECO:0007669"/>
    <property type="project" value="UniProtKB-KW"/>
</dbReference>
<dbReference type="GO" id="GO:0005819">
    <property type="term" value="C:spindle"/>
    <property type="evidence" value="ECO:0007669"/>
    <property type="project" value="UniProtKB-SubCell"/>
</dbReference>
<dbReference type="CDD" id="cd22724">
    <property type="entry name" value="FHA_Cep170A"/>
    <property type="match status" value="1"/>
</dbReference>
<dbReference type="FunFam" id="2.60.200.20:FF:000018">
    <property type="entry name" value="Centrosomal protein of 170 kDa"/>
    <property type="match status" value="1"/>
</dbReference>
<dbReference type="Gene3D" id="2.60.200.20">
    <property type="match status" value="1"/>
</dbReference>
<dbReference type="InterPro" id="IPR051176">
    <property type="entry name" value="Cent_Immune-Sig_Mod"/>
</dbReference>
<dbReference type="InterPro" id="IPR029300">
    <property type="entry name" value="CEP170_C"/>
</dbReference>
<dbReference type="InterPro" id="IPR000253">
    <property type="entry name" value="FHA_dom"/>
</dbReference>
<dbReference type="InterPro" id="IPR008984">
    <property type="entry name" value="SMAD_FHA_dom_sf"/>
</dbReference>
<dbReference type="PANTHER" id="PTHR15715">
    <property type="entry name" value="CENTROSOMAL PROTEIN OF 170 KDA"/>
    <property type="match status" value="1"/>
</dbReference>
<dbReference type="PANTHER" id="PTHR15715:SF17">
    <property type="entry name" value="CENTROSOMAL PROTEIN OF 170 KDA"/>
    <property type="match status" value="1"/>
</dbReference>
<dbReference type="Pfam" id="PF15308">
    <property type="entry name" value="CEP170_C"/>
    <property type="match status" value="1"/>
</dbReference>
<dbReference type="Pfam" id="PF00498">
    <property type="entry name" value="FHA"/>
    <property type="match status" value="1"/>
</dbReference>
<dbReference type="SMART" id="SM00240">
    <property type="entry name" value="FHA"/>
    <property type="match status" value="1"/>
</dbReference>
<dbReference type="SUPFAM" id="SSF49879">
    <property type="entry name" value="SMAD/FHA domain"/>
    <property type="match status" value="1"/>
</dbReference>
<dbReference type="PROSITE" id="PS50006">
    <property type="entry name" value="FHA_DOMAIN"/>
    <property type="match status" value="1"/>
</dbReference>
<organism>
    <name type="scientific">Mus musculus</name>
    <name type="common">Mouse</name>
    <dbReference type="NCBI Taxonomy" id="10090"/>
    <lineage>
        <taxon>Eukaryota</taxon>
        <taxon>Metazoa</taxon>
        <taxon>Chordata</taxon>
        <taxon>Craniata</taxon>
        <taxon>Vertebrata</taxon>
        <taxon>Euteleostomi</taxon>
        <taxon>Mammalia</taxon>
        <taxon>Eutheria</taxon>
        <taxon>Euarchontoglires</taxon>
        <taxon>Glires</taxon>
        <taxon>Rodentia</taxon>
        <taxon>Myomorpha</taxon>
        <taxon>Muroidea</taxon>
        <taxon>Muridae</taxon>
        <taxon>Murinae</taxon>
        <taxon>Mus</taxon>
        <taxon>Mus</taxon>
    </lineage>
</organism>
<keyword id="KW-0025">Alternative splicing</keyword>
<keyword id="KW-0175">Coiled coil</keyword>
<keyword id="KW-0963">Cytoplasm</keyword>
<keyword id="KW-0206">Cytoskeleton</keyword>
<keyword id="KW-0493">Microtubule</keyword>
<keyword id="KW-0597">Phosphoprotein</keyword>
<keyword id="KW-1185">Reference proteome</keyword>
<proteinExistence type="evidence at protein level"/>
<name>CE170_MOUSE</name>
<evidence type="ECO:0000250" key="1"/>
<evidence type="ECO:0000250" key="2">
    <source>
        <dbReference type="UniProtKB" id="Q5SW79"/>
    </source>
</evidence>
<evidence type="ECO:0000255" key="3"/>
<evidence type="ECO:0000255" key="4">
    <source>
        <dbReference type="PROSITE-ProRule" id="PRU00086"/>
    </source>
</evidence>
<evidence type="ECO:0000256" key="5">
    <source>
        <dbReference type="SAM" id="MobiDB-lite"/>
    </source>
</evidence>
<evidence type="ECO:0000269" key="6">
    <source>
    </source>
</evidence>
<evidence type="ECO:0000269" key="7">
    <source>
    </source>
</evidence>
<evidence type="ECO:0000269" key="8">
    <source>
    </source>
</evidence>
<evidence type="ECO:0000303" key="9">
    <source>
    </source>
</evidence>
<evidence type="ECO:0000303" key="10">
    <source>
    </source>
</evidence>
<evidence type="ECO:0000305" key="11"/>
<evidence type="ECO:0007744" key="12">
    <source>
    </source>
</evidence>
<evidence type="ECO:0007744" key="13">
    <source>
    </source>
</evidence>
<evidence type="ECO:0007744" key="14">
    <source>
    </source>
</evidence>
<reference key="1">
    <citation type="journal article" date="2005" name="Science">
        <title>The transcriptional landscape of the mammalian genome.</title>
        <authorList>
            <person name="Carninci P."/>
            <person name="Kasukawa T."/>
            <person name="Katayama S."/>
            <person name="Gough J."/>
            <person name="Frith M.C."/>
            <person name="Maeda N."/>
            <person name="Oyama R."/>
            <person name="Ravasi T."/>
            <person name="Lenhard B."/>
            <person name="Wells C."/>
            <person name="Kodzius R."/>
            <person name="Shimokawa K."/>
            <person name="Bajic V.B."/>
            <person name="Brenner S.E."/>
            <person name="Batalov S."/>
            <person name="Forrest A.R."/>
            <person name="Zavolan M."/>
            <person name="Davis M.J."/>
            <person name="Wilming L.G."/>
            <person name="Aidinis V."/>
            <person name="Allen J.E."/>
            <person name="Ambesi-Impiombato A."/>
            <person name="Apweiler R."/>
            <person name="Aturaliya R.N."/>
            <person name="Bailey T.L."/>
            <person name="Bansal M."/>
            <person name="Baxter L."/>
            <person name="Beisel K.W."/>
            <person name="Bersano T."/>
            <person name="Bono H."/>
            <person name="Chalk A.M."/>
            <person name="Chiu K.P."/>
            <person name="Choudhary V."/>
            <person name="Christoffels A."/>
            <person name="Clutterbuck D.R."/>
            <person name="Crowe M.L."/>
            <person name="Dalla E."/>
            <person name="Dalrymple B.P."/>
            <person name="de Bono B."/>
            <person name="Della Gatta G."/>
            <person name="di Bernardo D."/>
            <person name="Down T."/>
            <person name="Engstrom P."/>
            <person name="Fagiolini M."/>
            <person name="Faulkner G."/>
            <person name="Fletcher C.F."/>
            <person name="Fukushima T."/>
            <person name="Furuno M."/>
            <person name="Futaki S."/>
            <person name="Gariboldi M."/>
            <person name="Georgii-Hemming P."/>
            <person name="Gingeras T.R."/>
            <person name="Gojobori T."/>
            <person name="Green R.E."/>
            <person name="Gustincich S."/>
            <person name="Harbers M."/>
            <person name="Hayashi Y."/>
            <person name="Hensch T.K."/>
            <person name="Hirokawa N."/>
            <person name="Hill D."/>
            <person name="Huminiecki L."/>
            <person name="Iacono M."/>
            <person name="Ikeo K."/>
            <person name="Iwama A."/>
            <person name="Ishikawa T."/>
            <person name="Jakt M."/>
            <person name="Kanapin A."/>
            <person name="Katoh M."/>
            <person name="Kawasawa Y."/>
            <person name="Kelso J."/>
            <person name="Kitamura H."/>
            <person name="Kitano H."/>
            <person name="Kollias G."/>
            <person name="Krishnan S.P."/>
            <person name="Kruger A."/>
            <person name="Kummerfeld S.K."/>
            <person name="Kurochkin I.V."/>
            <person name="Lareau L.F."/>
            <person name="Lazarevic D."/>
            <person name="Lipovich L."/>
            <person name="Liu J."/>
            <person name="Liuni S."/>
            <person name="McWilliam S."/>
            <person name="Madan Babu M."/>
            <person name="Madera M."/>
            <person name="Marchionni L."/>
            <person name="Matsuda H."/>
            <person name="Matsuzawa S."/>
            <person name="Miki H."/>
            <person name="Mignone F."/>
            <person name="Miyake S."/>
            <person name="Morris K."/>
            <person name="Mottagui-Tabar S."/>
            <person name="Mulder N."/>
            <person name="Nakano N."/>
            <person name="Nakauchi H."/>
            <person name="Ng P."/>
            <person name="Nilsson R."/>
            <person name="Nishiguchi S."/>
            <person name="Nishikawa S."/>
            <person name="Nori F."/>
            <person name="Ohara O."/>
            <person name="Okazaki Y."/>
            <person name="Orlando V."/>
            <person name="Pang K.C."/>
            <person name="Pavan W.J."/>
            <person name="Pavesi G."/>
            <person name="Pesole G."/>
            <person name="Petrovsky N."/>
            <person name="Piazza S."/>
            <person name="Reed J."/>
            <person name="Reid J.F."/>
            <person name="Ring B.Z."/>
            <person name="Ringwald M."/>
            <person name="Rost B."/>
            <person name="Ruan Y."/>
            <person name="Salzberg S.L."/>
            <person name="Sandelin A."/>
            <person name="Schneider C."/>
            <person name="Schoenbach C."/>
            <person name="Sekiguchi K."/>
            <person name="Semple C.A."/>
            <person name="Seno S."/>
            <person name="Sessa L."/>
            <person name="Sheng Y."/>
            <person name="Shibata Y."/>
            <person name="Shimada H."/>
            <person name="Shimada K."/>
            <person name="Silva D."/>
            <person name="Sinclair B."/>
            <person name="Sperling S."/>
            <person name="Stupka E."/>
            <person name="Sugiura K."/>
            <person name="Sultana R."/>
            <person name="Takenaka Y."/>
            <person name="Taki K."/>
            <person name="Tammoja K."/>
            <person name="Tan S.L."/>
            <person name="Tang S."/>
            <person name="Taylor M.S."/>
            <person name="Tegner J."/>
            <person name="Teichmann S.A."/>
            <person name="Ueda H.R."/>
            <person name="van Nimwegen E."/>
            <person name="Verardo R."/>
            <person name="Wei C.L."/>
            <person name="Yagi K."/>
            <person name="Yamanishi H."/>
            <person name="Zabarovsky E."/>
            <person name="Zhu S."/>
            <person name="Zimmer A."/>
            <person name="Hide W."/>
            <person name="Bult C."/>
            <person name="Grimmond S.M."/>
            <person name="Teasdale R.D."/>
            <person name="Liu E.T."/>
            <person name="Brusic V."/>
            <person name="Quackenbush J."/>
            <person name="Wahlestedt C."/>
            <person name="Mattick J.S."/>
            <person name="Hume D.A."/>
            <person name="Kai C."/>
            <person name="Sasaki D."/>
            <person name="Tomaru Y."/>
            <person name="Fukuda S."/>
            <person name="Kanamori-Katayama M."/>
            <person name="Suzuki M."/>
            <person name="Aoki J."/>
            <person name="Arakawa T."/>
            <person name="Iida J."/>
            <person name="Imamura K."/>
            <person name="Itoh M."/>
            <person name="Kato T."/>
            <person name="Kawaji H."/>
            <person name="Kawagashira N."/>
            <person name="Kawashima T."/>
            <person name="Kojima M."/>
            <person name="Kondo S."/>
            <person name="Konno H."/>
            <person name="Nakano K."/>
            <person name="Ninomiya N."/>
            <person name="Nishio T."/>
            <person name="Okada M."/>
            <person name="Plessy C."/>
            <person name="Shibata K."/>
            <person name="Shiraki T."/>
            <person name="Suzuki S."/>
            <person name="Tagami M."/>
            <person name="Waki K."/>
            <person name="Watahiki A."/>
            <person name="Okamura-Oho Y."/>
            <person name="Suzuki H."/>
            <person name="Kawai J."/>
            <person name="Hayashizaki Y."/>
        </authorList>
    </citation>
    <scope>NUCLEOTIDE SEQUENCE [LARGE SCALE MRNA] (ISOFORM 3)</scope>
    <scope>NUCLEOTIDE SEQUENCE [LARGE SCALE MRNA] OF 1462-1588 (ISOFORMS 1/3)</scope>
    <source>
        <strain>C57BL/6J</strain>
        <tissue>Muellerian duct</tissue>
        <tissue>Testis</tissue>
    </source>
</reference>
<reference key="2">
    <citation type="journal article" date="2009" name="PLoS Biol.">
        <title>Lineage-specific biology revealed by a finished genome assembly of the mouse.</title>
        <authorList>
            <person name="Church D.M."/>
            <person name="Goodstadt L."/>
            <person name="Hillier L.W."/>
            <person name="Zody M.C."/>
            <person name="Goldstein S."/>
            <person name="She X."/>
            <person name="Bult C.J."/>
            <person name="Agarwala R."/>
            <person name="Cherry J.L."/>
            <person name="DiCuccio M."/>
            <person name="Hlavina W."/>
            <person name="Kapustin Y."/>
            <person name="Meric P."/>
            <person name="Maglott D."/>
            <person name="Birtle Z."/>
            <person name="Marques A.C."/>
            <person name="Graves T."/>
            <person name="Zhou S."/>
            <person name="Teague B."/>
            <person name="Potamousis K."/>
            <person name="Churas C."/>
            <person name="Place M."/>
            <person name="Herschleb J."/>
            <person name="Runnheim R."/>
            <person name="Forrest D."/>
            <person name="Amos-Landgraf J."/>
            <person name="Schwartz D.C."/>
            <person name="Cheng Z."/>
            <person name="Lindblad-Toh K."/>
            <person name="Eichler E.E."/>
            <person name="Ponting C.P."/>
        </authorList>
    </citation>
    <scope>NUCLEOTIDE SEQUENCE [LARGE SCALE GENOMIC DNA]</scope>
    <source>
        <strain>C57BL/6J</strain>
    </source>
</reference>
<reference key="3">
    <citation type="journal article" date="2004" name="Genome Res.">
        <title>The status, quality, and expansion of the NIH full-length cDNA project: the Mammalian Gene Collection (MGC).</title>
        <authorList>
            <consortium name="The MGC Project Team"/>
        </authorList>
    </citation>
    <scope>NUCLEOTIDE SEQUENCE [LARGE SCALE MRNA] (ISOFORM 2)</scope>
    <source>
        <strain>C57BL/6J</strain>
        <tissue>Brain</tissue>
    </source>
</reference>
<reference key="4">
    <citation type="journal article" date="2004" name="DNA Res.">
        <title>Prediction of the coding sequences of mouse homologues of KIAA gene: IV. The complete nucleotide sequences of 500 mouse KIAA-homologous cDNAs identified by screening of terminal sequences of cDNA clones randomly sampled from size-fractionated libraries.</title>
        <authorList>
            <person name="Okazaki N."/>
            <person name="Kikuno R."/>
            <person name="Ohara R."/>
            <person name="Inamoto S."/>
            <person name="Koseki H."/>
            <person name="Hiraoka S."/>
            <person name="Saga Y."/>
            <person name="Seino S."/>
            <person name="Nishimura M."/>
            <person name="Kaisho T."/>
            <person name="Hoshino K."/>
            <person name="Kitamura H."/>
            <person name="Nagase T."/>
            <person name="Ohara O."/>
            <person name="Koga H."/>
        </authorList>
    </citation>
    <scope>NUCLEOTIDE SEQUENCE [LARGE SCALE MRNA] OF 786-1588 (ISOFORM 1)</scope>
</reference>
<reference key="5">
    <citation type="journal article" date="2006" name="Mol. Cell. Proteomics">
        <title>Comprehensive identification of phosphorylation sites in postsynaptic density preparations.</title>
        <authorList>
            <person name="Trinidad J.C."/>
            <person name="Specht C.G."/>
            <person name="Thalhammer A."/>
            <person name="Schoepfer R."/>
            <person name="Burlingame A.L."/>
        </authorList>
    </citation>
    <scope>IDENTIFICATION BY MASS SPECTROMETRY [LARGE SCALE ANALYSIS]</scope>
    <source>
        <tissue>Brain</tissue>
    </source>
</reference>
<reference key="6">
    <citation type="journal article" date="2009" name="Immunity">
        <title>The phagosomal proteome in interferon-gamma-activated macrophages.</title>
        <authorList>
            <person name="Trost M."/>
            <person name="English L."/>
            <person name="Lemieux S."/>
            <person name="Courcelles M."/>
            <person name="Desjardins M."/>
            <person name="Thibault P."/>
        </authorList>
    </citation>
    <scope>PHOSPHORYLATION [LARGE SCALE ANALYSIS] AT SER-358 AND SER-1102</scope>
    <scope>IDENTIFICATION BY MASS SPECTROMETRY [LARGE SCALE ANALYSIS]</scope>
</reference>
<reference key="7">
    <citation type="journal article" date="2009" name="Mol. Cell. Proteomics">
        <title>Large scale localization of protein phosphorylation by use of electron capture dissociation mass spectrometry.</title>
        <authorList>
            <person name="Sweet S.M."/>
            <person name="Bailey C.M."/>
            <person name="Cunningham D.L."/>
            <person name="Heath J.K."/>
            <person name="Cooper H.J."/>
        </authorList>
    </citation>
    <scope>PHOSPHORYLATION [LARGE SCALE ANALYSIS] AT SER-443 AND SER-829</scope>
    <scope>IDENTIFICATION BY MASS SPECTROMETRY [LARGE SCALE ANALYSIS]</scope>
    <source>
        <tissue>Embryonic fibroblast</tissue>
    </source>
</reference>
<reference key="8">
    <citation type="journal article" date="2010" name="Cell">
        <title>A tissue-specific atlas of mouse protein phosphorylation and expression.</title>
        <authorList>
            <person name="Huttlin E.L."/>
            <person name="Jedrychowski M.P."/>
            <person name="Elias J.E."/>
            <person name="Goswami T."/>
            <person name="Rad R."/>
            <person name="Beausoleil S.A."/>
            <person name="Villen J."/>
            <person name="Haas W."/>
            <person name="Sowa M.E."/>
            <person name="Gygi S.P."/>
        </authorList>
    </citation>
    <scope>PHOSPHORYLATION [LARGE SCALE ANALYSIS] AT SER-355; SER-358; SER-443; SER-829; SER-1008; THR-1012; SER-1102; SER-1150; SER-1155; SER-1229; SER-1521 AND SER-1522</scope>
    <scope>IDENTIFICATION BY MASS SPECTROMETRY [LARGE SCALE ANALYSIS]</scope>
    <source>
        <tissue>Brain</tissue>
        <tissue>Brown adipose tissue</tissue>
        <tissue>Kidney</tissue>
        <tissue>Lung</tissue>
        <tissue>Spleen</tissue>
        <tissue>Testis</tissue>
    </source>
</reference>
<reference key="9">
    <citation type="journal article" date="2013" name="EMBO J.">
        <title>Kif3a interacts with Dynactin subunit p150 Glued to organize centriole subdistal appendages.</title>
        <authorList>
            <person name="Kodani A."/>
            <person name="Salome Sirerol-Piquer M."/>
            <person name="Seol A."/>
            <person name="Garcia-Verdugo J.M."/>
            <person name="Reiter J.F."/>
        </authorList>
    </citation>
    <scope>SUBCELLULAR LOCATION</scope>
</reference>
<reference key="10">
    <citation type="journal article" date="2016" name="Cell">
        <title>Cell-type-specific alternative splicing governs cell fate in the developing cerebral cortex.</title>
        <authorList>
            <person name="Zhang X."/>
            <person name="Chen M.H."/>
            <person name="Wu X."/>
            <person name="Kodani A."/>
            <person name="Fan J."/>
            <person name="Doan R."/>
            <person name="Ozawa M."/>
            <person name="Ma J."/>
            <person name="Yoshida N."/>
            <person name="Reiter J.F."/>
            <person name="Black D.L."/>
            <person name="Kharchenko P.V."/>
            <person name="Sharp P.A."/>
            <person name="Walsh C.A."/>
        </authorList>
    </citation>
    <scope>INTERACTION WITH NIN</scope>
</reference>
<reference key="11">
    <citation type="journal article" date="2018" name="Mol. Biol. Cell">
        <title>Actin-dependent regulation of cilia length by the inverted formin FHDC1.</title>
        <authorList>
            <person name="Copeland S.J."/>
            <person name="McRae A."/>
            <person name="Guarguaglini G."/>
            <person name="Trinkle-Mulcahy L."/>
            <person name="Copeland J.W."/>
        </authorList>
    </citation>
    <scope>INTERACTION WITH FHDC1</scope>
</reference>
<protein>
    <recommendedName>
        <fullName>Centrosomal protein of 170 kDa</fullName>
        <shortName>Cep170</shortName>
    </recommendedName>
</protein>
<feature type="chain" id="PRO_0000282888" description="Centrosomal protein of 170 kDa">
    <location>
        <begin position="1"/>
        <end position="1588"/>
    </location>
</feature>
<feature type="domain" description="FHA" evidence="4">
    <location>
        <begin position="23"/>
        <end position="73"/>
    </location>
</feature>
<feature type="region of interest" description="Disordered" evidence="5">
    <location>
        <begin position="121"/>
        <end position="172"/>
    </location>
</feature>
<feature type="region of interest" description="Disordered" evidence="5">
    <location>
        <begin position="299"/>
        <end position="323"/>
    </location>
</feature>
<feature type="region of interest" description="Disordered" evidence="5">
    <location>
        <begin position="338"/>
        <end position="447"/>
    </location>
</feature>
<feature type="region of interest" description="Disordered" evidence="5">
    <location>
        <begin position="461"/>
        <end position="508"/>
    </location>
</feature>
<feature type="region of interest" description="Disordered" evidence="5">
    <location>
        <begin position="602"/>
        <end position="854"/>
    </location>
</feature>
<feature type="region of interest" description="Targeting to microtubules" evidence="1">
    <location>
        <begin position="844"/>
        <end position="1588"/>
    </location>
</feature>
<feature type="region of interest" description="Disordered" evidence="5">
    <location>
        <begin position="899"/>
        <end position="1222"/>
    </location>
</feature>
<feature type="region of interest" description="Targeting to centrosomes" evidence="1">
    <location>
        <begin position="1103"/>
        <end position="1588"/>
    </location>
</feature>
<feature type="region of interest" description="Disordered" evidence="5">
    <location>
        <begin position="1228"/>
        <end position="1247"/>
    </location>
</feature>
<feature type="region of interest" description="Disordered" evidence="5">
    <location>
        <begin position="1315"/>
        <end position="1334"/>
    </location>
</feature>
<feature type="region of interest" description="Disordered" evidence="5">
    <location>
        <begin position="1370"/>
        <end position="1398"/>
    </location>
</feature>
<feature type="region of interest" description="Disordered" evidence="5">
    <location>
        <begin position="1511"/>
        <end position="1540"/>
    </location>
</feature>
<feature type="coiled-coil region" evidence="3">
    <location>
        <begin position="1467"/>
        <end position="1495"/>
    </location>
</feature>
<feature type="compositionally biased region" description="Basic and acidic residues" evidence="5">
    <location>
        <begin position="155"/>
        <end position="164"/>
    </location>
</feature>
<feature type="compositionally biased region" description="Basic and acidic residues" evidence="5">
    <location>
        <begin position="347"/>
        <end position="357"/>
    </location>
</feature>
<feature type="compositionally biased region" description="Basic and acidic residues" evidence="5">
    <location>
        <begin position="407"/>
        <end position="418"/>
    </location>
</feature>
<feature type="compositionally biased region" description="Polar residues" evidence="5">
    <location>
        <begin position="620"/>
        <end position="631"/>
    </location>
</feature>
<feature type="compositionally biased region" description="Basic and acidic residues" evidence="5">
    <location>
        <begin position="645"/>
        <end position="654"/>
    </location>
</feature>
<feature type="compositionally biased region" description="Basic and acidic residues" evidence="5">
    <location>
        <begin position="663"/>
        <end position="691"/>
    </location>
</feature>
<feature type="compositionally biased region" description="Basic and acidic residues" evidence="5">
    <location>
        <begin position="720"/>
        <end position="731"/>
    </location>
</feature>
<feature type="compositionally biased region" description="Basic and acidic residues" evidence="5">
    <location>
        <begin position="764"/>
        <end position="774"/>
    </location>
</feature>
<feature type="compositionally biased region" description="Basic and acidic residues" evidence="5">
    <location>
        <begin position="789"/>
        <end position="821"/>
    </location>
</feature>
<feature type="compositionally biased region" description="Polar residues" evidence="5">
    <location>
        <begin position="822"/>
        <end position="839"/>
    </location>
</feature>
<feature type="compositionally biased region" description="Basic and acidic residues" evidence="5">
    <location>
        <begin position="899"/>
        <end position="908"/>
    </location>
</feature>
<feature type="compositionally biased region" description="Polar residues" evidence="5">
    <location>
        <begin position="913"/>
        <end position="937"/>
    </location>
</feature>
<feature type="compositionally biased region" description="Basic and acidic residues" evidence="5">
    <location>
        <begin position="967"/>
        <end position="980"/>
    </location>
</feature>
<feature type="compositionally biased region" description="Polar residues" evidence="5">
    <location>
        <begin position="1028"/>
        <end position="1038"/>
    </location>
</feature>
<feature type="compositionally biased region" description="Basic and acidic residues" evidence="5">
    <location>
        <begin position="1049"/>
        <end position="1062"/>
    </location>
</feature>
<feature type="compositionally biased region" description="Low complexity" evidence="5">
    <location>
        <begin position="1075"/>
        <end position="1093"/>
    </location>
</feature>
<feature type="compositionally biased region" description="Low complexity" evidence="5">
    <location>
        <begin position="1112"/>
        <end position="1128"/>
    </location>
</feature>
<feature type="compositionally biased region" description="Low complexity" evidence="5">
    <location>
        <begin position="1158"/>
        <end position="1173"/>
    </location>
</feature>
<feature type="compositionally biased region" description="Polar residues" evidence="5">
    <location>
        <begin position="1191"/>
        <end position="1218"/>
    </location>
</feature>
<feature type="compositionally biased region" description="Polar residues" evidence="5">
    <location>
        <begin position="1518"/>
        <end position="1534"/>
    </location>
</feature>
<feature type="modified residue" description="Phosphoserine" evidence="2">
    <location>
        <position position="141"/>
    </location>
</feature>
<feature type="modified residue" description="Phosphoserine" evidence="14">
    <location>
        <position position="355"/>
    </location>
</feature>
<feature type="modified residue" description="Phosphoserine" evidence="13 14">
    <location>
        <position position="358"/>
    </location>
</feature>
<feature type="modified residue" description="Phosphotyrosine" evidence="2">
    <location>
        <position position="363"/>
    </location>
</feature>
<feature type="modified residue" description="Phosphoserine" evidence="12 14">
    <location>
        <position position="443"/>
    </location>
</feature>
<feature type="modified residue" description="Phosphoserine" evidence="2">
    <location>
        <position position="463"/>
    </location>
</feature>
<feature type="modified residue" description="Phosphoserine" evidence="2">
    <location>
        <position position="494"/>
    </location>
</feature>
<feature type="modified residue" description="Phosphothreonine" evidence="2">
    <location>
        <position position="498"/>
    </location>
</feature>
<feature type="modified residue" description="Phosphoserine" evidence="2">
    <location>
        <position position="568"/>
    </location>
</feature>
<feature type="modified residue" description="Phosphoserine" evidence="2">
    <location>
        <position position="577"/>
    </location>
</feature>
<feature type="modified residue" description="Phosphoserine" evidence="2">
    <location>
        <position position="628"/>
    </location>
</feature>
<feature type="modified residue" description="Phosphoserine" evidence="2">
    <location>
        <position position="631"/>
    </location>
</feature>
<feature type="modified residue" description="Phosphothreonine" evidence="2">
    <location>
        <position position="639"/>
    </location>
</feature>
<feature type="modified residue" description="Phosphoserine" evidence="2">
    <location>
        <position position="662"/>
    </location>
</feature>
<feature type="modified residue" description="Phosphoserine" evidence="2">
    <location>
        <position position="718"/>
    </location>
</feature>
<feature type="modified residue" description="Phosphothreonine" evidence="2">
    <location>
        <position position="752"/>
    </location>
</feature>
<feature type="modified residue" description="Phosphoserine" evidence="12 14">
    <location>
        <position position="829"/>
    </location>
</feature>
<feature type="modified residue" description="Phosphoserine" evidence="2">
    <location>
        <position position="870"/>
    </location>
</feature>
<feature type="modified residue" description="Phosphoserine" evidence="2">
    <location>
        <position position="872"/>
    </location>
</feature>
<feature type="modified residue" description="Phosphothreonine" evidence="2">
    <location>
        <position position="906"/>
    </location>
</feature>
<feature type="modified residue" description="Phosphothreonine" evidence="2">
    <location>
        <position position="912"/>
    </location>
</feature>
<feature type="modified residue" description="Phosphoserine" evidence="2">
    <location>
        <position position="922"/>
    </location>
</feature>
<feature type="modified residue" description="Phosphoserine" evidence="2">
    <location>
        <position position="925"/>
    </location>
</feature>
<feature type="modified residue" description="Phosphoserine" evidence="2">
    <location>
        <position position="950"/>
    </location>
</feature>
<feature type="modified residue" description="Phosphoserine" evidence="14">
    <location>
        <position position="1008"/>
    </location>
</feature>
<feature type="modified residue" description="Phosphothreonine" evidence="14">
    <location>
        <position position="1012"/>
    </location>
</feature>
<feature type="modified residue" description="Phosphothreonine" evidence="2">
    <location>
        <position position="1047"/>
    </location>
</feature>
<feature type="modified residue" description="Phosphoserine" evidence="2">
    <location>
        <position position="1048"/>
    </location>
</feature>
<feature type="modified residue" description="Phosphoserine" evidence="13 14">
    <location>
        <position position="1102"/>
    </location>
</feature>
<feature type="modified residue" description="Phosphoserine" evidence="2">
    <location>
        <position position="1104"/>
    </location>
</feature>
<feature type="modified residue" description="Phosphoserine" evidence="2">
    <location>
        <position position="1122"/>
    </location>
</feature>
<feature type="modified residue" description="Phosphoserine" evidence="2">
    <location>
        <position position="1123"/>
    </location>
</feature>
<feature type="modified residue" description="Phosphoserine" evidence="2">
    <location>
        <position position="1135"/>
    </location>
</feature>
<feature type="modified residue" description="Phosphoserine" evidence="14">
    <location>
        <position position="1150"/>
    </location>
</feature>
<feature type="modified residue" description="Phosphoserine" evidence="14">
    <location>
        <position position="1155"/>
    </location>
</feature>
<feature type="modified residue" description="Phosphoserine" evidence="2">
    <location>
        <position position="1188"/>
    </location>
</feature>
<feature type="modified residue" description="Phosphoserine" evidence="2">
    <location>
        <position position="1195"/>
    </location>
</feature>
<feature type="modified residue" description="Phosphoserine" evidence="2">
    <location>
        <position position="1200"/>
    </location>
</feature>
<feature type="modified residue" description="Phosphoserine" evidence="14">
    <location>
        <position position="1229"/>
    </location>
</feature>
<feature type="modified residue" description="Phosphoserine" evidence="2">
    <location>
        <position position="1231"/>
    </location>
</feature>
<feature type="modified residue" description="Phosphoserine" evidence="2">
    <location>
        <position position="1241"/>
    </location>
</feature>
<feature type="modified residue" description="Phosphoserine" evidence="2">
    <location>
        <position position="1260"/>
    </location>
</feature>
<feature type="modified residue" description="Phosphoserine" evidence="2">
    <location>
        <position position="1270"/>
    </location>
</feature>
<feature type="modified residue" description="Phosphoserine" evidence="2">
    <location>
        <position position="1362"/>
    </location>
</feature>
<feature type="modified residue" description="Phosphoserine" evidence="14">
    <location>
        <position position="1521"/>
    </location>
</feature>
<feature type="modified residue" description="Phosphoserine" evidence="14">
    <location>
        <position position="1522"/>
    </location>
</feature>
<feature type="splice variant" id="VSP_024243" description="In isoform 3." evidence="10">
    <location>
        <begin position="1"/>
        <end position="1257"/>
    </location>
</feature>
<feature type="splice variant" id="VSP_024244" description="In isoform 2." evidence="9">
    <original>CSTEAKHVEGQSAAASEEALFPFCRE</original>
    <variation>KNTSVAVASNSYWASIYSLNKSHSTL</variation>
    <location>
        <begin position="211"/>
        <end position="236"/>
    </location>
</feature>
<feature type="splice variant" id="VSP_024245" description="In isoform 2." evidence="9">
    <location>
        <begin position="237"/>
        <end position="1588"/>
    </location>
</feature>
<feature type="splice variant" id="VSP_024246" description="In isoform 3." evidence="10">
    <location>
        <begin position="1344"/>
        <end position="1353"/>
    </location>
</feature>
<accession>Q6A065</accession>
<accession>Q7TQD9</accession>
<accession>Q8BJW2</accession>
<accession>Q9D3Z0</accession>
<comment type="function">
    <text evidence="2">Plays a role in microtubule organization. Required for centriole subdistal appendage assembly.</text>
</comment>
<comment type="subunit">
    <text evidence="2 7 8">Interacts with CCDC68 and CCDC120; leading to recruitment to centrosomes (By similarity). Interacts with PLK1 (By similarity). Interacts with NIN (PubMed:27565344). Interacts with FHDC1 (PubMed:29742020). Interacts with CCDC61 (By similarity). Interacts with TBK1; efficient complex formation may be dependent on the presence of CCDC61 (By similarity).</text>
</comment>
<comment type="interaction">
    <interactant intactId="EBI-2554140">
        <id>Q6A065</id>
    </interactant>
    <interactant intactId="EBI-529989">
        <id>Q9NRI5</id>
        <label>DISC1</label>
    </interactant>
    <organismsDiffer>true</organismsDiffer>
    <experiments>2</experiments>
</comment>
<comment type="subcellular location">
    <subcellularLocation>
        <location evidence="2">Cytoplasm</location>
        <location evidence="2">Cytoskeleton</location>
        <location evidence="2">Microtubule organizing center</location>
        <location evidence="2">Centrosome</location>
    </subcellularLocation>
    <subcellularLocation>
        <location evidence="6">Cytoplasm</location>
        <location evidence="6">Cytoskeleton</location>
        <location evidence="6">Microtubule organizing center</location>
        <location evidence="6">Centrosome</location>
        <location evidence="6">Centriole</location>
    </subcellularLocation>
    <subcellularLocation>
        <location evidence="2">Cytoplasm</location>
        <location evidence="2">Cytoskeleton</location>
        <location evidence="2">Spindle</location>
    </subcellularLocation>
    <text evidence="2 6">Associated with the mature mother centriole. Associated with spindle microtubules during mitosis (By similarity). Localizes to the distal appendage region of the centriole (By similarity). Localizes at the centriole proximal ends (By similarity).</text>
</comment>
<comment type="alternative products">
    <event type="alternative splicing"/>
    <isoform>
        <id>Q6A065-1</id>
        <name>1</name>
        <sequence type="displayed"/>
    </isoform>
    <isoform>
        <id>Q6A065-2</id>
        <name>2</name>
        <sequence type="described" ref="VSP_024244 VSP_024245"/>
    </isoform>
    <isoform>
        <id>Q6A065-3</id>
        <name>3</name>
        <sequence type="described" ref="VSP_024243 VSP_024246"/>
    </isoform>
</comment>
<comment type="PTM">
    <text>Phosphorylated; probably by PLK1.</text>
</comment>
<comment type="similarity">
    <text evidence="11">Belongs to the CEP170 family.</text>
</comment>
<sequence>MSLTSWFLVSSGGTRHRLPREMIFVGRDDCELMLQSRSVDKQHAVINYDASMDEHLVKDLGSLNGTFVNDVRIPEQTYITLKLEDKLRFGYDTNLFTVVRGEMRVPEEALKHEKFTIQLQLSQKSSESELPKSASAKGTDSKVEAAAEVQPRATEALKSEEKPMDVSAMPRGTPLYGQPSWWGDAEEDEQRAFKANGKPEGKSQEAGASGCSTEAKHVEGQSAAASEEALFPFCREPSYFEIPTKEFQQPSQIAESTIHEIPTKDTPSSHTAGAGHASFTIEFDDSTPGKVTIRDHVTKFTSDQRHKSKKASPGTQDLPGIQTGMMAPENKVADWLAQNNPPQMVWERTEEDSKSIKSDVPVYLKRLKGNKHDDGTQSDSENAGAHRRCSKRATLEEHLRRHHSEQKKKAQSTEKHQEQAATSSTHHRGGHGVPHGKLLKQKSEEPSVSLPFLQTALLRSSGSLGHRPSQEMDVMLKNQATSASSEKDNDDDQSDKGTYTIELENPNSEEVEARKMIDKVFGVDDNQDYNRPIINEKHKGLIKDWALNSAAVVMEERKPLSTPGFHNSEEAISSSGSKRWVSQWASLAANHTRHDPEERLMELSATVENETDTGDAGVSLRSTSCTTSLASQGERKRRTLPQLPNEEKLLESSRAKVVPQRSEIGEKQDTELQEKEAQVYQSEKHDADRGLSKMSRAVNGESPKTGGDGKALLHSGSSSSKEKSETEKETSLVKQTLAKMQQQEQKEQAQWTPTKFPSKNALGHIDKCREESSKQESQLLEKVSGHSTSKGDRVIQNESKRRKAEEIPKCQASKGDKKESSKSLVRQGSFTIDKPSSNIPIELIPHINKQNSSVPTALALTSASRLRERSDSLDTDSSMDTTLILKDTEAVMAFLEAKLREDNNKTDEGPDTPSYNRDNSISPESDVDTASTISLVTGETERKSTQKRKSFTSLYKDRCSTSSPSKDVTKSGSREKIEKKAKSRSADIGARADGRKFVQSSGRIRQPSIDLTDDDQTSSVPHSAISDIMSSDQETYSCKSHGRTPLTSADEHNIHSKLEGGKATKSKTSPVASGSTSKSTTLPRPRPTRTSLLRRARLGEASDSELADADKASVASEVSTTSSTSKPPTGRRTISRIDLLAQPRRTRLGSLSARSDSEATISRSSASARTAEAVIRSGARLVPSDKLSPRTRANSISRLSDSKVKSMSSTHGSPSVNSRWRRFPTDYASTSEDEFGSNRNSPKHTRLRTSPALKTTRMQSTGSAMPASSSFKHRIKEQEDYIRDWTAHREEIARISQDLALIAREINDVAGEIDSVTSSGTAPSTTVSTAATTPGSAIDTREEVGDLHGEMHKLVDRVFDESLNFRKIPPLVHSKTPEGNNGRSVDSRPQPAEHPDHLTITRRRTWSRDEVMGDNLLLSSVFQFSRKIRQSIDKTAGKIRILFKDKDRNWDDIENKLRAESEVPIVKTSSMEISSILQELKRVEKQLQVINAMIDPDGTLEALNNMGFPNAILPSPPKQKSSPVNNHSSPSQTPALCPPETRALHPAAAGVAAAASTEFENAESEADFSIHFNRFNPDGEEEDVTVHE</sequence>
<gene>
    <name type="primary">Cep170</name>
    <name type="synonym">Kiaa0470</name>
</gene>